<proteinExistence type="inferred from homology"/>
<organism>
    <name type="scientific">Yersinia pestis (strain Pestoides F)</name>
    <dbReference type="NCBI Taxonomy" id="386656"/>
    <lineage>
        <taxon>Bacteria</taxon>
        <taxon>Pseudomonadati</taxon>
        <taxon>Pseudomonadota</taxon>
        <taxon>Gammaproteobacteria</taxon>
        <taxon>Enterobacterales</taxon>
        <taxon>Yersiniaceae</taxon>
        <taxon>Yersinia</taxon>
    </lineage>
</organism>
<evidence type="ECO:0000255" key="1">
    <source>
        <dbReference type="HAMAP-Rule" id="MF_00197"/>
    </source>
</evidence>
<feature type="chain" id="PRO_1000011989" description="Diaminopimelate epimerase">
    <location>
        <begin position="1"/>
        <end position="274"/>
    </location>
</feature>
<feature type="active site" description="Proton donor" evidence="1">
    <location>
        <position position="73"/>
    </location>
</feature>
<feature type="active site" description="Proton acceptor" evidence="1">
    <location>
        <position position="217"/>
    </location>
</feature>
<feature type="binding site" evidence="1">
    <location>
        <position position="11"/>
    </location>
    <ligand>
        <name>substrate</name>
    </ligand>
</feature>
<feature type="binding site" evidence="1">
    <location>
        <position position="44"/>
    </location>
    <ligand>
        <name>substrate</name>
    </ligand>
</feature>
<feature type="binding site" evidence="1">
    <location>
        <position position="64"/>
    </location>
    <ligand>
        <name>substrate</name>
    </ligand>
</feature>
<feature type="binding site" evidence="1">
    <location>
        <begin position="74"/>
        <end position="75"/>
    </location>
    <ligand>
        <name>substrate</name>
    </ligand>
</feature>
<feature type="binding site" evidence="1">
    <location>
        <position position="157"/>
    </location>
    <ligand>
        <name>substrate</name>
    </ligand>
</feature>
<feature type="binding site" evidence="1">
    <location>
        <position position="190"/>
    </location>
    <ligand>
        <name>substrate</name>
    </ligand>
</feature>
<feature type="binding site" evidence="1">
    <location>
        <begin position="208"/>
        <end position="209"/>
    </location>
    <ligand>
        <name>substrate</name>
    </ligand>
</feature>
<feature type="binding site" evidence="1">
    <location>
        <begin position="218"/>
        <end position="219"/>
    </location>
    <ligand>
        <name>substrate</name>
    </ligand>
</feature>
<feature type="site" description="Could be important to modulate the pK values of the two catalytic cysteine residues" evidence="1">
    <location>
        <position position="159"/>
    </location>
</feature>
<feature type="site" description="Could be important to modulate the pK values of the two catalytic cysteine residues" evidence="1">
    <location>
        <position position="208"/>
    </location>
</feature>
<feature type="site" description="Important for dimerization" evidence="1">
    <location>
        <position position="268"/>
    </location>
</feature>
<protein>
    <recommendedName>
        <fullName evidence="1">Diaminopimelate epimerase</fullName>
        <shortName evidence="1">DAP epimerase</shortName>
        <ecNumber evidence="1">5.1.1.7</ecNumber>
    </recommendedName>
    <alternativeName>
        <fullName evidence="1">PLP-independent amino acid racemase</fullName>
    </alternativeName>
</protein>
<reference key="1">
    <citation type="submission" date="2007-02" db="EMBL/GenBank/DDBJ databases">
        <title>Complete sequence of chromosome of Yersinia pestis Pestoides F.</title>
        <authorList>
            <consortium name="US DOE Joint Genome Institute"/>
            <person name="Copeland A."/>
            <person name="Lucas S."/>
            <person name="Lapidus A."/>
            <person name="Barry K."/>
            <person name="Detter J.C."/>
            <person name="Glavina del Rio T."/>
            <person name="Hammon N."/>
            <person name="Israni S."/>
            <person name="Dalin E."/>
            <person name="Tice H."/>
            <person name="Pitluck S."/>
            <person name="Di Bartolo G."/>
            <person name="Chain P."/>
            <person name="Malfatti S."/>
            <person name="Shin M."/>
            <person name="Vergez L."/>
            <person name="Schmutz J."/>
            <person name="Larimer F."/>
            <person name="Land M."/>
            <person name="Hauser L."/>
            <person name="Worsham P."/>
            <person name="Chu M."/>
            <person name="Bearden S."/>
            <person name="Garcia E."/>
            <person name="Richardson P."/>
        </authorList>
    </citation>
    <scope>NUCLEOTIDE SEQUENCE [LARGE SCALE GENOMIC DNA]</scope>
    <source>
        <strain>Pestoides F</strain>
    </source>
</reference>
<gene>
    <name evidence="1" type="primary">dapF</name>
    <name type="ordered locus">YPDSF_3462</name>
</gene>
<comment type="function">
    <text evidence="1">Catalyzes the stereoinversion of LL-2,6-diaminopimelate (L,L-DAP) to meso-diaminopimelate (meso-DAP), a precursor of L-lysine and an essential component of the bacterial peptidoglycan.</text>
</comment>
<comment type="catalytic activity">
    <reaction evidence="1">
        <text>(2S,6S)-2,6-diaminopimelate = meso-2,6-diaminopimelate</text>
        <dbReference type="Rhea" id="RHEA:15393"/>
        <dbReference type="ChEBI" id="CHEBI:57609"/>
        <dbReference type="ChEBI" id="CHEBI:57791"/>
        <dbReference type="EC" id="5.1.1.7"/>
    </reaction>
</comment>
<comment type="pathway">
    <text evidence="1">Amino-acid biosynthesis; L-lysine biosynthesis via DAP pathway; DL-2,6-diaminopimelate from LL-2,6-diaminopimelate: step 1/1.</text>
</comment>
<comment type="subunit">
    <text evidence="1">Homodimer.</text>
</comment>
<comment type="subcellular location">
    <subcellularLocation>
        <location evidence="1">Cytoplasm</location>
    </subcellularLocation>
</comment>
<comment type="similarity">
    <text evidence="1">Belongs to the diaminopimelate epimerase family.</text>
</comment>
<name>DAPF_YERPP</name>
<keyword id="KW-0028">Amino-acid biosynthesis</keyword>
<keyword id="KW-0963">Cytoplasm</keyword>
<keyword id="KW-0413">Isomerase</keyword>
<keyword id="KW-0457">Lysine biosynthesis</keyword>
<dbReference type="EC" id="5.1.1.7" evidence="1"/>
<dbReference type="EMBL" id="CP000668">
    <property type="protein sequence ID" value="ABP41815.1"/>
    <property type="molecule type" value="Genomic_DNA"/>
</dbReference>
<dbReference type="RefSeq" id="WP_002211471.1">
    <property type="nucleotide sequence ID" value="NZ_CP009715.1"/>
</dbReference>
<dbReference type="SMR" id="A4TRA3"/>
<dbReference type="GeneID" id="57974864"/>
<dbReference type="KEGG" id="ypp:YPDSF_3462"/>
<dbReference type="PATRIC" id="fig|386656.14.peg.863"/>
<dbReference type="UniPathway" id="UPA00034">
    <property type="reaction ID" value="UER00025"/>
</dbReference>
<dbReference type="GO" id="GO:0005829">
    <property type="term" value="C:cytosol"/>
    <property type="evidence" value="ECO:0007669"/>
    <property type="project" value="TreeGrafter"/>
</dbReference>
<dbReference type="GO" id="GO:0008837">
    <property type="term" value="F:diaminopimelate epimerase activity"/>
    <property type="evidence" value="ECO:0007669"/>
    <property type="project" value="UniProtKB-UniRule"/>
</dbReference>
<dbReference type="GO" id="GO:0009089">
    <property type="term" value="P:lysine biosynthetic process via diaminopimelate"/>
    <property type="evidence" value="ECO:0007669"/>
    <property type="project" value="UniProtKB-UniRule"/>
</dbReference>
<dbReference type="FunFam" id="3.10.310.10:FF:000001">
    <property type="entry name" value="Diaminopimelate epimerase"/>
    <property type="match status" value="1"/>
</dbReference>
<dbReference type="FunFam" id="3.10.310.10:FF:000002">
    <property type="entry name" value="Diaminopimelate epimerase"/>
    <property type="match status" value="1"/>
</dbReference>
<dbReference type="Gene3D" id="3.10.310.10">
    <property type="entry name" value="Diaminopimelate Epimerase, Chain A, domain 1"/>
    <property type="match status" value="2"/>
</dbReference>
<dbReference type="HAMAP" id="MF_00197">
    <property type="entry name" value="DAP_epimerase"/>
    <property type="match status" value="1"/>
</dbReference>
<dbReference type="InterPro" id="IPR018510">
    <property type="entry name" value="DAP_epimerase_AS"/>
</dbReference>
<dbReference type="InterPro" id="IPR001653">
    <property type="entry name" value="DAP_epimerase_DapF"/>
</dbReference>
<dbReference type="NCBIfam" id="TIGR00652">
    <property type="entry name" value="DapF"/>
    <property type="match status" value="1"/>
</dbReference>
<dbReference type="PANTHER" id="PTHR31689:SF0">
    <property type="entry name" value="DIAMINOPIMELATE EPIMERASE"/>
    <property type="match status" value="1"/>
</dbReference>
<dbReference type="PANTHER" id="PTHR31689">
    <property type="entry name" value="DIAMINOPIMELATE EPIMERASE, CHLOROPLASTIC"/>
    <property type="match status" value="1"/>
</dbReference>
<dbReference type="Pfam" id="PF01678">
    <property type="entry name" value="DAP_epimerase"/>
    <property type="match status" value="2"/>
</dbReference>
<dbReference type="SUPFAM" id="SSF54506">
    <property type="entry name" value="Diaminopimelate epimerase-like"/>
    <property type="match status" value="1"/>
</dbReference>
<dbReference type="PROSITE" id="PS01326">
    <property type="entry name" value="DAP_EPIMERASE"/>
    <property type="match status" value="1"/>
</dbReference>
<sequence>MQFSKMHGLGNDFMVVDAVTQNVYFSPELIRRLADRHTGVGFDQMLVVEPPYDPELDFHYRIFNADGSEVSQCGNGARCFARFVRLKGLTNKREISVSTQTGRMILSVTEDEQVCVNMGEPDFEPQTVPFRAAKAEKTYILRAAEHTVLCGVVSMGNPHCVMQVDDVSVANVALLGPVLENHERFPERANIGFMQVVSRDHIRLRVYERGAGETQACGSGACAAVAVGVVQDLLNENVHVELPGGSLHIRWQGPGHPLYMTGPATHVYDGFIHL</sequence>
<accession>A4TRA3</accession>